<gene>
    <name type="primary">kap111</name>
    <name type="ORF">SPAC22G7.02</name>
</gene>
<keyword id="KW-0539">Nucleus</keyword>
<keyword id="KW-1185">Reference proteome</keyword>
<keyword id="KW-0813">Transport</keyword>
<comment type="function">
    <text evidence="2">Functions as a component of the nuclear pore complex (NPC). NPC components, collectively referred to as nucleoporins (NUPs), can play the role of both NPC structural components and of docking or interaction partners for transiently associated nuclear transport factors. Active directional transport is assured by both, a Phe-Gly (FG) repeat affinity gradient for these transport factors across the NPC and a transport cofactor concentration gradient across the nuclear envelope.</text>
</comment>
<comment type="subcellular location">
    <subcellularLocation>
        <location evidence="1 2 3">Nucleus</location>
    </subcellularLocation>
    <text>Nuclear rim.</text>
</comment>
<comment type="similarity">
    <text evidence="4">Belongs to the importin beta family.</text>
</comment>
<accession>Q09796</accession>
<accession>Q9US85</accession>
<feature type="chain" id="PRO_0000116404" description="Importin beta-like protein kap111">
    <location>
        <begin position="1"/>
        <end position="990"/>
    </location>
</feature>
<feature type="sequence conflict" description="In Ref. 2; BAA87282." evidence="4" ref="2">
    <original>LIC</original>
    <variation>VGD</variation>
    <location>
        <begin position="728"/>
        <end position="730"/>
    </location>
</feature>
<dbReference type="EMBL" id="CU329670">
    <property type="protein sequence ID" value="CAA91126.1"/>
    <property type="molecule type" value="Genomic_DNA"/>
</dbReference>
<dbReference type="EMBL" id="AB027978">
    <property type="protein sequence ID" value="BAA87282.1"/>
    <property type="molecule type" value="Genomic_DNA"/>
</dbReference>
<dbReference type="PIR" id="T11612">
    <property type="entry name" value="T11612"/>
</dbReference>
<dbReference type="RefSeq" id="NP_593051.1">
    <property type="nucleotide sequence ID" value="NM_001018449.2"/>
</dbReference>
<dbReference type="SMR" id="Q09796"/>
<dbReference type="BioGRID" id="277969">
    <property type="interactions" value="1"/>
</dbReference>
<dbReference type="FunCoup" id="Q09796">
    <property type="interactions" value="309"/>
</dbReference>
<dbReference type="STRING" id="284812.Q09796"/>
<dbReference type="iPTMnet" id="Q09796"/>
<dbReference type="PaxDb" id="4896-SPAC22G7.02.1"/>
<dbReference type="EnsemblFungi" id="SPAC22G7.02.1">
    <property type="protein sequence ID" value="SPAC22G7.02.1:pep"/>
    <property type="gene ID" value="SPAC22G7.02"/>
</dbReference>
<dbReference type="GeneID" id="2541467"/>
<dbReference type="KEGG" id="spo:2541467"/>
<dbReference type="PomBase" id="SPAC22G7.02">
    <property type="gene designation" value="kap111"/>
</dbReference>
<dbReference type="VEuPathDB" id="FungiDB:SPAC22G7.02"/>
<dbReference type="eggNOG" id="KOG2022">
    <property type="taxonomic scope" value="Eukaryota"/>
</dbReference>
<dbReference type="HOGENOM" id="CLU_005271_0_0_1"/>
<dbReference type="InParanoid" id="Q09796"/>
<dbReference type="OMA" id="CLASIGK"/>
<dbReference type="PhylomeDB" id="Q09796"/>
<dbReference type="PRO" id="PR:Q09796"/>
<dbReference type="Proteomes" id="UP000002485">
    <property type="component" value="Chromosome I"/>
</dbReference>
<dbReference type="GO" id="GO:0005737">
    <property type="term" value="C:cytoplasm"/>
    <property type="evidence" value="ECO:0000318"/>
    <property type="project" value="GO_Central"/>
</dbReference>
<dbReference type="GO" id="GO:0005829">
    <property type="term" value="C:cytosol"/>
    <property type="evidence" value="ECO:0007005"/>
    <property type="project" value="PomBase"/>
</dbReference>
<dbReference type="GO" id="GO:0005635">
    <property type="term" value="C:nuclear envelope"/>
    <property type="evidence" value="ECO:0007005"/>
    <property type="project" value="PomBase"/>
</dbReference>
<dbReference type="GO" id="GO:0034399">
    <property type="term" value="C:nuclear periphery"/>
    <property type="evidence" value="ECO:0000314"/>
    <property type="project" value="PomBase"/>
</dbReference>
<dbReference type="GO" id="GO:0005634">
    <property type="term" value="C:nucleus"/>
    <property type="evidence" value="ECO:0007005"/>
    <property type="project" value="PomBase"/>
</dbReference>
<dbReference type="GO" id="GO:0005525">
    <property type="term" value="F:GTP binding"/>
    <property type="evidence" value="ECO:0000303"/>
    <property type="project" value="PomBase"/>
</dbReference>
<dbReference type="GO" id="GO:0061608">
    <property type="term" value="F:nuclear import signal receptor activity"/>
    <property type="evidence" value="ECO:0000266"/>
    <property type="project" value="PomBase"/>
</dbReference>
<dbReference type="GO" id="GO:0006606">
    <property type="term" value="P:protein import into nucleus"/>
    <property type="evidence" value="ECO:0000318"/>
    <property type="project" value="GO_Central"/>
</dbReference>
<dbReference type="Gene3D" id="1.25.10.10">
    <property type="entry name" value="Leucine-rich Repeat Variant"/>
    <property type="match status" value="1"/>
</dbReference>
<dbReference type="InterPro" id="IPR011989">
    <property type="entry name" value="ARM-like"/>
</dbReference>
<dbReference type="InterPro" id="IPR016024">
    <property type="entry name" value="ARM-type_fold"/>
</dbReference>
<dbReference type="InterPro" id="IPR051345">
    <property type="entry name" value="Importin_beta-like_NTR"/>
</dbReference>
<dbReference type="InterPro" id="IPR040520">
    <property type="entry name" value="Importin_rep_3"/>
</dbReference>
<dbReference type="PANTHER" id="PTHR12363:SF33">
    <property type="entry name" value="IMPORTIN-13"/>
    <property type="match status" value="1"/>
</dbReference>
<dbReference type="PANTHER" id="PTHR12363">
    <property type="entry name" value="TRANSPORTIN 3 AND IMPORTIN 13"/>
    <property type="match status" value="1"/>
</dbReference>
<dbReference type="Pfam" id="PF18806">
    <property type="entry name" value="Importin_rep_3"/>
    <property type="match status" value="1"/>
</dbReference>
<dbReference type="SUPFAM" id="SSF48371">
    <property type="entry name" value="ARM repeat"/>
    <property type="match status" value="1"/>
</dbReference>
<sequence length="990" mass="111468">MDGNEIAHAKKLVYDLYSGSLSPSAIAATEKELQKAQRSQQGWNIGLFMLQSKDVYEQFFGALTLQMKINTQLETLSDKDLVQLFVQLLQKLLWDDGLPALVERKVICTLASLTIKYELEKKEEASLKVIYCLFCNKLEFFNADMNAASVLNNLFPPASSRNAQLTASYINELLLELSFSIYTKENEDALFNNVFRPCSNIIVSVLVFIFTNYSLDLSKEKNVAALEEALNCMIAISSYLAKASVSVQSVLPAFTECMDLTVNCIALDEVSEKAMNCLADLLANYSNFITQPTIERLWTILTGPWGETHLQQELEDPDSGEENDYSFLNIVIGFAEAMLPQIIDHIQEEKSIRLLYILASLLSFPGYAIVEEKVSWRTLEFWTTLIEDFSMSKAATDPSKDEIFKQIAFSVVEKAWWKMLLPSPEQWNSWPSSSRDSFNSYRRDLGDLLESSYSIFGERLYAMYITTIENFFSDGTGSPQSLEVSFYCLCCILEYDTNDSDTLDAWLTRLFETSFAIKASAFQNPQLLKTCSQLLSSCSCFLQNHPQYLNISLPVLFDALHISETSIQMTVSRSIHTLCTTCASHLLTEIDGFMAVVEELTPKLVYVPSVLEKIYSSVGYVTQRIEDIELRISYLMRLLNCILAQLQPSLYPNLEIFENVLKSCLQSVAGVALSQSPIGESPIIDVEQSTQETTFWQQSCIAEFQAKLISFLTHSESMALQYSDVVGLICKIMIAGLNEVEPSPFSLPIVTTIQYFCDRFTEFPAAVLLTLGSAILTCPYGQTDIIDKVLIDMCSSIQNSVVIINEESFMNNIDITVELYHFFSIILQKHPSFLETMYPDFTQLILNRAINLLGKPERLLESAAGQFIISFITSEKSDLLNTHTDFVNAIRSPLIAKILLGFGGNASRSSLPLLSDILGKLKAQNFSATRACLTQSLEEEGFPSRNVSNEIKRRFLTDLLKARIKDKVKQFWILCKGLESTPYGNSSWTF</sequence>
<protein>
    <recommendedName>
        <fullName>Importin beta-like protein kap111</fullName>
    </recommendedName>
    <alternativeName>
        <fullName>Karyopherin-111</fullName>
    </alternativeName>
</protein>
<reference key="1">
    <citation type="journal article" date="2002" name="Nature">
        <title>The genome sequence of Schizosaccharomyces pombe.</title>
        <authorList>
            <person name="Wood V."/>
            <person name="Gwilliam R."/>
            <person name="Rajandream M.A."/>
            <person name="Lyne M.H."/>
            <person name="Lyne R."/>
            <person name="Stewart A."/>
            <person name="Sgouros J.G."/>
            <person name="Peat N."/>
            <person name="Hayles J."/>
            <person name="Baker S.G."/>
            <person name="Basham D."/>
            <person name="Bowman S."/>
            <person name="Brooks K."/>
            <person name="Brown D."/>
            <person name="Brown S."/>
            <person name="Chillingworth T."/>
            <person name="Churcher C.M."/>
            <person name="Collins M."/>
            <person name="Connor R."/>
            <person name="Cronin A."/>
            <person name="Davis P."/>
            <person name="Feltwell T."/>
            <person name="Fraser A."/>
            <person name="Gentles S."/>
            <person name="Goble A."/>
            <person name="Hamlin N."/>
            <person name="Harris D.E."/>
            <person name="Hidalgo J."/>
            <person name="Hodgson G."/>
            <person name="Holroyd S."/>
            <person name="Hornsby T."/>
            <person name="Howarth S."/>
            <person name="Huckle E.J."/>
            <person name="Hunt S."/>
            <person name="Jagels K."/>
            <person name="James K.D."/>
            <person name="Jones L."/>
            <person name="Jones M."/>
            <person name="Leather S."/>
            <person name="McDonald S."/>
            <person name="McLean J."/>
            <person name="Mooney P."/>
            <person name="Moule S."/>
            <person name="Mungall K.L."/>
            <person name="Murphy L.D."/>
            <person name="Niblett D."/>
            <person name="Odell C."/>
            <person name="Oliver K."/>
            <person name="O'Neil S."/>
            <person name="Pearson D."/>
            <person name="Quail M.A."/>
            <person name="Rabbinowitsch E."/>
            <person name="Rutherford K.M."/>
            <person name="Rutter S."/>
            <person name="Saunders D."/>
            <person name="Seeger K."/>
            <person name="Sharp S."/>
            <person name="Skelton J."/>
            <person name="Simmonds M.N."/>
            <person name="Squares R."/>
            <person name="Squares S."/>
            <person name="Stevens K."/>
            <person name="Taylor K."/>
            <person name="Taylor R.G."/>
            <person name="Tivey A."/>
            <person name="Walsh S.V."/>
            <person name="Warren T."/>
            <person name="Whitehead S."/>
            <person name="Woodward J.R."/>
            <person name="Volckaert G."/>
            <person name="Aert R."/>
            <person name="Robben J."/>
            <person name="Grymonprez B."/>
            <person name="Weltjens I."/>
            <person name="Vanstreels E."/>
            <person name="Rieger M."/>
            <person name="Schaefer M."/>
            <person name="Mueller-Auer S."/>
            <person name="Gabel C."/>
            <person name="Fuchs M."/>
            <person name="Duesterhoeft A."/>
            <person name="Fritzc C."/>
            <person name="Holzer E."/>
            <person name="Moestl D."/>
            <person name="Hilbert H."/>
            <person name="Borzym K."/>
            <person name="Langer I."/>
            <person name="Beck A."/>
            <person name="Lehrach H."/>
            <person name="Reinhardt R."/>
            <person name="Pohl T.M."/>
            <person name="Eger P."/>
            <person name="Zimmermann W."/>
            <person name="Wedler H."/>
            <person name="Wambutt R."/>
            <person name="Purnelle B."/>
            <person name="Goffeau A."/>
            <person name="Cadieu E."/>
            <person name="Dreano S."/>
            <person name="Gloux S."/>
            <person name="Lelaure V."/>
            <person name="Mottier S."/>
            <person name="Galibert F."/>
            <person name="Aves S.J."/>
            <person name="Xiang Z."/>
            <person name="Hunt C."/>
            <person name="Moore K."/>
            <person name="Hurst S.M."/>
            <person name="Lucas M."/>
            <person name="Rochet M."/>
            <person name="Gaillardin C."/>
            <person name="Tallada V.A."/>
            <person name="Garzon A."/>
            <person name="Thode G."/>
            <person name="Daga R.R."/>
            <person name="Cruzado L."/>
            <person name="Jimenez J."/>
            <person name="Sanchez M."/>
            <person name="del Rey F."/>
            <person name="Benito J."/>
            <person name="Dominguez A."/>
            <person name="Revuelta J.L."/>
            <person name="Moreno S."/>
            <person name="Armstrong J."/>
            <person name="Forsburg S.L."/>
            <person name="Cerutti L."/>
            <person name="Lowe T."/>
            <person name="McCombie W.R."/>
            <person name="Paulsen I."/>
            <person name="Potashkin J."/>
            <person name="Shpakovski G.V."/>
            <person name="Ussery D."/>
            <person name="Barrell B.G."/>
            <person name="Nurse P."/>
        </authorList>
    </citation>
    <scope>NUCLEOTIDE SEQUENCE [LARGE SCALE GENOMIC DNA]</scope>
    <source>
        <strain>972 / ATCC 24843</strain>
    </source>
</reference>
<reference key="2">
    <citation type="journal article" date="2000" name="Genes Cells">
        <title>Large-scale screening of intracellular protein localization in living fission yeast cells by the use of a GFP-fusion genomic DNA library.</title>
        <authorList>
            <person name="Ding D.-Q."/>
            <person name="Tomita Y."/>
            <person name="Yamamoto A."/>
            <person name="Chikashige Y."/>
            <person name="Haraguchi T."/>
            <person name="Hiraoka Y."/>
        </authorList>
    </citation>
    <scope>NUCLEOTIDE SEQUENCE [LARGE SCALE GENOMIC DNA] OF 554-730</scope>
    <scope>SUBCELLULAR LOCATION</scope>
    <source>
        <strain>ATCC 38364 / 968</strain>
    </source>
</reference>
<reference key="3">
    <citation type="journal article" date="2004" name="Yeast">
        <title>Identification of genes encoding putative nucleoporins and transport factors in the fission yeast Schizosaccharomyces pombe: a deletion analysis.</title>
        <authorList>
            <person name="Chen X.Q."/>
            <person name="Du X."/>
            <person name="Liu J."/>
            <person name="Balasubramanian M.K."/>
            <person name="Balasundaram D."/>
        </authorList>
    </citation>
    <scope>FUNCTION</scope>
    <scope>SUBCELLULAR LOCATION</scope>
</reference>
<reference key="4">
    <citation type="journal article" date="2006" name="Nat. Biotechnol.">
        <title>ORFeome cloning and global analysis of protein localization in the fission yeast Schizosaccharomyces pombe.</title>
        <authorList>
            <person name="Matsuyama A."/>
            <person name="Arai R."/>
            <person name="Yashiroda Y."/>
            <person name="Shirai A."/>
            <person name="Kamata A."/>
            <person name="Sekido S."/>
            <person name="Kobayashi Y."/>
            <person name="Hashimoto A."/>
            <person name="Hamamoto M."/>
            <person name="Hiraoka Y."/>
            <person name="Horinouchi S."/>
            <person name="Yoshida M."/>
        </authorList>
    </citation>
    <scope>SUBCELLULAR LOCATION [LARGE SCALE ANALYSIS]</scope>
</reference>
<proteinExistence type="inferred from homology"/>
<organism>
    <name type="scientific">Schizosaccharomyces pombe (strain 972 / ATCC 24843)</name>
    <name type="common">Fission yeast</name>
    <dbReference type="NCBI Taxonomy" id="284812"/>
    <lineage>
        <taxon>Eukaryota</taxon>
        <taxon>Fungi</taxon>
        <taxon>Dikarya</taxon>
        <taxon>Ascomycota</taxon>
        <taxon>Taphrinomycotina</taxon>
        <taxon>Schizosaccharomycetes</taxon>
        <taxon>Schizosaccharomycetales</taxon>
        <taxon>Schizosaccharomycetaceae</taxon>
        <taxon>Schizosaccharomyces</taxon>
    </lineage>
</organism>
<evidence type="ECO:0000269" key="1">
    <source>
    </source>
</evidence>
<evidence type="ECO:0000269" key="2">
    <source>
    </source>
</evidence>
<evidence type="ECO:0000269" key="3">
    <source>
    </source>
</evidence>
<evidence type="ECO:0000305" key="4"/>
<name>KA111_SCHPO</name>